<feature type="chain" id="PRO_0000406186" description="Tripartite terminase subunit 3">
    <location>
        <begin position="1"/>
        <end position="734"/>
    </location>
</feature>
<feature type="short sequence motif" description="Nuclear localization signal" evidence="1">
    <location>
        <begin position="183"/>
        <end position="189"/>
    </location>
</feature>
<feature type="short sequence motif" description="Walker A motif" evidence="1">
    <location>
        <begin position="258"/>
        <end position="265"/>
    </location>
</feature>
<feature type="short sequence motif" description="Walker B motif" evidence="1">
    <location>
        <begin position="352"/>
        <end position="357"/>
    </location>
</feature>
<feature type="active site" description="For ATPase activity" evidence="1">
    <location>
        <position position="357"/>
    </location>
</feature>
<feature type="active site" description="For nuclease activity" evidence="1">
    <location>
        <position position="509"/>
    </location>
</feature>
<feature type="active site" description="For nuclease activity" evidence="1">
    <location>
        <position position="581"/>
    </location>
</feature>
<feature type="active site" description="For nuclease activity" evidence="1">
    <location>
        <position position="706"/>
    </location>
</feature>
<organism>
    <name type="scientific">Human herpesvirus 2 (strain HG52)</name>
    <name type="common">HHV-2</name>
    <name type="synonym">Human herpes simplex virus 2</name>
    <dbReference type="NCBI Taxonomy" id="10315"/>
    <lineage>
        <taxon>Viruses</taxon>
        <taxon>Duplodnaviria</taxon>
        <taxon>Heunggongvirae</taxon>
        <taxon>Peploviricota</taxon>
        <taxon>Herviviricetes</taxon>
        <taxon>Herpesvirales</taxon>
        <taxon>Orthoherpesviridae</taxon>
        <taxon>Alphaherpesvirinae</taxon>
        <taxon>Simplexvirus</taxon>
        <taxon>Simplexvirus humanalpha2</taxon>
        <taxon>Human herpesvirus 2</taxon>
    </lineage>
</organism>
<comment type="function">
    <text evidence="1">Component of the molecular motor that translocates viral genomic DNA in empty capsid during DNA packaging. Forms a tripartite terminase complex together with TRM1 and TRM2 in the host cytoplasm. Once the complex reaches the host nucleus, it interacts with the capsid portal vertex. This portal forms a ring in which genomic DNA is translocated into the capsid. TRM3 carries an RNase H-like nuclease activity that plays an important role for the cleavage of concatemeric viral DNA into unit length genomes.</text>
</comment>
<comment type="subunit">
    <text evidence="1">Interacts with the terminase subunits TRM1 and TRM2. Interacts with portal protein.</text>
</comment>
<comment type="subcellular location">
    <subcellularLocation>
        <location evidence="1">Host nucleus</location>
    </subcellularLocation>
    <text evidence="1">Responsible for the nuclear localization of the two others subunits TRM1 and TRM2.</text>
</comment>
<comment type="similarity">
    <text evidence="1">Belongs to the herpesviridae TRM3 protein family.</text>
</comment>
<gene>
    <name evidence="1" type="primary">TRM3</name>
    <name type="ordered locus">UL15</name>
</gene>
<evidence type="ECO:0000255" key="1">
    <source>
        <dbReference type="HAMAP-Rule" id="MF_04013"/>
    </source>
</evidence>
<protein>
    <recommendedName>
        <fullName evidence="1">Tripartite terminase subunit 3</fullName>
        <ecNumber evidence="1">3.1.-.-</ecNumber>
    </recommendedName>
    <alternativeName>
        <fullName evidence="1">Terminase large subunit</fullName>
    </alternativeName>
</protein>
<organismHost>
    <name type="scientific">Homo sapiens</name>
    <name type="common">Human</name>
    <dbReference type="NCBI Taxonomy" id="9606"/>
</organismHost>
<accession>P89438</accession>
<sequence length="734" mass="80973">MFGQQLASDVQQYLERLEKQRQQKVGVDEASAGLTLGGDALRVPFLDFATATPKRHQTVVPGVGTLHDCCEHSPLFSAVARRLLFNSLVPAQLRGRDFGGDHTAKLEFLAPELVRAVARLRFRECAPEDAVPQRNAYYSVLNTFQALHRSEAFRQLVHFVRDFAQLLKTSFRASSLAETTGPPKKRAKVDVATHGQTYGTLELFQKMILMHATYFLAAVLLGDHAEQVNTFLRLVFEIPLFSDTAVRHFRQRATVFLVPRRHGKTWFLVPLIALSLASFRGIKIGYTAHIRKATEPVFDEIDACLRGWFGSSRVDHVKGETISFSFPDGSRSTIVFASSHNTNGIRGQDFNLLFVDEANFIRPDAVQTIMGFLNQANCKIIFVSSTNTGKASTSFLYNLRGAADELLNVVTYICDDHMPRVVTHTNATACSCYILNKPVFITMDGAVRRTADLFLPDSFMQEIIGGQARETGDDRPVLTKSAGERFLLYRPSTTTNSGLMAPELYVYVDPAFTANTRASGTGIAVVGRYRDDFIIFALEHFFLRALTGSAPADIARCVVHSLAQVLALHPGAFRSVRVAVEGNSSQDSAVAIATHVHTEMHRILASAGANGPGPELLFYHCEPPGGAVLYPFFLLNKQKTPAFEYFIKKFNSGGVMASQELVSVTVRLQTDPVEYLSEQLNNLIETVSPNTDVRMYSGKRNGAADDLMVAVIMAIYLAAPTGIPPAFFPITRTS</sequence>
<reference key="1">
    <citation type="journal article" date="1991" name="J. Gen. Virol.">
        <title>Comparative sequence analysis of the long repeat regions and adjoining parts of the long unique regions in the genomes of herpes simplex viruses types 1 and 2.</title>
        <authorList>
            <person name="McGeoch D.J."/>
            <person name="Cunningham C."/>
            <person name="McIntyre G."/>
            <person name="Dolan A."/>
        </authorList>
    </citation>
    <scope>NUCLEOTIDE SEQUENCE [LARGE SCALE GENOMIC DNA]</scope>
    <source>
        <strain>HG52</strain>
    </source>
</reference>
<dbReference type="EC" id="3.1.-.-" evidence="1"/>
<dbReference type="EMBL" id="Z86099">
    <property type="protein sequence ID" value="CAB06775.1"/>
    <property type="molecule type" value="Genomic_DNA"/>
</dbReference>
<dbReference type="RefSeq" id="YP_009137166.1">
    <property type="nucleotide sequence ID" value="NC_001798.2"/>
</dbReference>
<dbReference type="SMR" id="P89438"/>
<dbReference type="DNASU" id="1487298"/>
<dbReference type="GeneID" id="1487298"/>
<dbReference type="KEGG" id="vg:1487298"/>
<dbReference type="Proteomes" id="UP000001874">
    <property type="component" value="Segment"/>
</dbReference>
<dbReference type="GO" id="GO:0042025">
    <property type="term" value="C:host cell nucleus"/>
    <property type="evidence" value="ECO:0007669"/>
    <property type="project" value="UniProtKB-SubCell"/>
</dbReference>
<dbReference type="GO" id="GO:0003677">
    <property type="term" value="F:DNA binding"/>
    <property type="evidence" value="ECO:0007669"/>
    <property type="project" value="UniProtKB-KW"/>
</dbReference>
<dbReference type="GO" id="GO:0016787">
    <property type="term" value="F:hydrolase activity"/>
    <property type="evidence" value="ECO:0007669"/>
    <property type="project" value="UniProtKB-KW"/>
</dbReference>
<dbReference type="GO" id="GO:0051276">
    <property type="term" value="P:chromosome organization"/>
    <property type="evidence" value="ECO:0007669"/>
    <property type="project" value="InterPro"/>
</dbReference>
<dbReference type="Gene3D" id="3.30.420.320">
    <property type="match status" value="1"/>
</dbReference>
<dbReference type="Gene3D" id="3.40.50.300">
    <property type="entry name" value="P-loop containing nucleotide triphosphate hydrolases"/>
    <property type="match status" value="1"/>
</dbReference>
<dbReference type="HAMAP" id="MF_04013">
    <property type="entry name" value="HSV_TRM3"/>
    <property type="match status" value="1"/>
</dbReference>
<dbReference type="InterPro" id="IPR003498">
    <property type="entry name" value="DNA_pack_C"/>
</dbReference>
<dbReference type="InterPro" id="IPR038435">
    <property type="entry name" value="DNA_pack_C_sf"/>
</dbReference>
<dbReference type="InterPro" id="IPR003499">
    <property type="entry name" value="DNA_pack_N"/>
</dbReference>
<dbReference type="InterPro" id="IPR033663">
    <property type="entry name" value="HSV_TRM3"/>
</dbReference>
<dbReference type="InterPro" id="IPR027417">
    <property type="entry name" value="P-loop_NTPase"/>
</dbReference>
<dbReference type="Pfam" id="PF02499">
    <property type="entry name" value="DNA_pack_C"/>
    <property type="match status" value="1"/>
</dbReference>
<dbReference type="Pfam" id="PF02500">
    <property type="entry name" value="DNA_pack_N"/>
    <property type="match status" value="1"/>
</dbReference>
<name>TRM3_HHV2H</name>
<keyword id="KW-0238">DNA-binding</keyword>
<keyword id="KW-1048">Host nucleus</keyword>
<keyword id="KW-0378">Hydrolase</keyword>
<keyword id="KW-1185">Reference proteome</keyword>
<keyword id="KW-0231">Viral genome packaging</keyword>
<keyword id="KW-1188">Viral release from host cell</keyword>
<proteinExistence type="inferred from homology"/>